<sequence>MDPFLVLLHSLSGSLSGNDLMELKFLCRERVSKRKLERVQSGLDLFTVLLEQNDLERGHTGLLRELLASLRRHDLLQRLDDFEAGTATAAPPGEADLQVAFDIVCDNVGRDWKRLARELKVSEAKMDGIEEKYPRSLSERVRESLKVWKNAEKKNASVAGLVKALRTCRLNLVADLVEEAQESVSKSENMSPVLRDSTVSSSETP</sequence>
<comment type="function">
    <text evidence="1">Apoptotic adapter molecule that recruits caspases CASP8 or CASP10 to the activated FAS/CD95 or TNFRSF1A/TNFR-1 receptors. The resulting aggregate called the death-inducing signaling complex (DISC) performs CASP8 proteolytic activation. Active CASP8 initiates the subsequent cascade of caspases mediating apoptosis. Involved in interferon-mediated antiviral immune response, playing a role in the positive regulation of interferon signaling.</text>
</comment>
<comment type="subunit">
    <text evidence="1 5 6 7 8 9 10">Can self-associate (By similarity). Component of the AIM2 PANoptosome complex, a multiprotein complex that drives inflammatory cell death (PANoptosis) (PubMed:34471287). Component of the death-induced signaling complex (DISC) composed of cell surface receptor FAS/CD95 or TNFRSF1A, adapter protein FADD and the CASP8 protease; recruitment of CASP8 to the complex is required for processing of CASP8 into the p18 and p10 subunits (By similarity). Interacts (via death domain) with FAS (via death domain) (By similarity). Interacts directly (via DED domain) with NOL3 (via CARD domain); inhibits death-inducing signaling complex (DISC) assembly by inhibiting the increase in FAS-FADD binding induced by FAS activation (PubMed:15383280). Interacts with CFLAR, PEA15 and MBD4 (By similarity). When phosphorylated, part of a complex containing HIPK3 and FAS (By similarity). May interact with MAVS/IPS1 (By similarity). Interacts with MOCV v-CFLAR protein and PIDD1 (By similarity). Interacts with RIPK1 and TRADD (PubMed:28842570, PubMed:29440439, PubMed:30185824, PubMed:31519887). Interacts with stimulated TNFRSF10B (By similarity). Interacts with DDX24 (By similarity).</text>
</comment>
<comment type="interaction">
    <interactant intactId="EBI-524415">
        <id>Q61160</id>
    </interactant>
    <interactant intactId="EBI-851690">
        <id>O89110</id>
        <label>Casp8</label>
    </interactant>
    <organismsDiffer>false</organismsDiffer>
    <experiments>6</experiments>
</comment>
<comment type="interaction">
    <interactant intactId="EBI-524415">
        <id>Q61160</id>
    </interactant>
    <interactant intactId="EBI-296206">
        <id>P25446</id>
        <label>Fas</label>
    </interactant>
    <organismsDiffer>false</organismsDiffer>
    <experiments>3</experiments>
</comment>
<comment type="interaction">
    <interactant intactId="EBI-524415">
        <id>Q61160</id>
    </interactant>
    <interactant intactId="EBI-529119">
        <id>Q60855</id>
        <label>Ripk1</label>
    </interactant>
    <organismsDiffer>false</organismsDiffer>
    <experiments>9</experiments>
</comment>
<comment type="interaction">
    <interactant intactId="EBI-524415">
        <id>Q61160</id>
    </interactant>
    <interactant intactId="EBI-2367423">
        <id>Q9QZL0</id>
        <label>Ripk3</label>
    </interactant>
    <organismsDiffer>false</organismsDiffer>
    <experiments>6</experiments>
</comment>
<comment type="subcellular location">
    <subcellularLocation>
        <location evidence="1">Cytoplasm</location>
    </subcellularLocation>
</comment>
<comment type="domain">
    <text evidence="1">Contains a death domain involved in the binding of the corresponding domain within Fas receptor.</text>
</comment>
<comment type="domain">
    <text evidence="1">The interaction between the FAS and FADD death domains is crucial for the formation of the death-inducing signaling complex (DISC).</text>
</comment>
<gene>
    <name evidence="11 13" type="primary">Fadd</name>
    <name evidence="11" type="synonym">Mort1</name>
</gene>
<reference key="1">
    <citation type="journal article" date="1996" name="Mol. Cell. Biol.">
        <title>A mouse Fas-associated protein with homology to the human Mort1/FADD protein is essential for Fas-induced apoptosis.</title>
        <authorList>
            <person name="Zhang J."/>
            <person name="Winoto A."/>
        </authorList>
    </citation>
    <scope>NUCLEOTIDE SEQUENCE [MRNA]</scope>
</reference>
<reference key="2">
    <citation type="journal article" date="1996" name="Cell">
        <title>TRADD-TRAF2 and TRADD-FADD interactions define two distinct TNF receptor 1 signal transduction pathways.</title>
        <authorList>
            <person name="Hsu H."/>
            <person name="Shu H.-B."/>
            <person name="Pan M.G."/>
            <person name="Goeddel D.V."/>
        </authorList>
    </citation>
    <scope>NUCLEOTIDE SEQUENCE [MRNA]</scope>
</reference>
<reference key="3">
    <citation type="journal article" date="2005" name="Science">
        <title>The transcriptional landscape of the mammalian genome.</title>
        <authorList>
            <person name="Carninci P."/>
            <person name="Kasukawa T."/>
            <person name="Katayama S."/>
            <person name="Gough J."/>
            <person name="Frith M.C."/>
            <person name="Maeda N."/>
            <person name="Oyama R."/>
            <person name="Ravasi T."/>
            <person name="Lenhard B."/>
            <person name="Wells C."/>
            <person name="Kodzius R."/>
            <person name="Shimokawa K."/>
            <person name="Bajic V.B."/>
            <person name="Brenner S.E."/>
            <person name="Batalov S."/>
            <person name="Forrest A.R."/>
            <person name="Zavolan M."/>
            <person name="Davis M.J."/>
            <person name="Wilming L.G."/>
            <person name="Aidinis V."/>
            <person name="Allen J.E."/>
            <person name="Ambesi-Impiombato A."/>
            <person name="Apweiler R."/>
            <person name="Aturaliya R.N."/>
            <person name="Bailey T.L."/>
            <person name="Bansal M."/>
            <person name="Baxter L."/>
            <person name="Beisel K.W."/>
            <person name="Bersano T."/>
            <person name="Bono H."/>
            <person name="Chalk A.M."/>
            <person name="Chiu K.P."/>
            <person name="Choudhary V."/>
            <person name="Christoffels A."/>
            <person name="Clutterbuck D.R."/>
            <person name="Crowe M.L."/>
            <person name="Dalla E."/>
            <person name="Dalrymple B.P."/>
            <person name="de Bono B."/>
            <person name="Della Gatta G."/>
            <person name="di Bernardo D."/>
            <person name="Down T."/>
            <person name="Engstrom P."/>
            <person name="Fagiolini M."/>
            <person name="Faulkner G."/>
            <person name="Fletcher C.F."/>
            <person name="Fukushima T."/>
            <person name="Furuno M."/>
            <person name="Futaki S."/>
            <person name="Gariboldi M."/>
            <person name="Georgii-Hemming P."/>
            <person name="Gingeras T.R."/>
            <person name="Gojobori T."/>
            <person name="Green R.E."/>
            <person name="Gustincich S."/>
            <person name="Harbers M."/>
            <person name="Hayashi Y."/>
            <person name="Hensch T.K."/>
            <person name="Hirokawa N."/>
            <person name="Hill D."/>
            <person name="Huminiecki L."/>
            <person name="Iacono M."/>
            <person name="Ikeo K."/>
            <person name="Iwama A."/>
            <person name="Ishikawa T."/>
            <person name="Jakt M."/>
            <person name="Kanapin A."/>
            <person name="Katoh M."/>
            <person name="Kawasawa Y."/>
            <person name="Kelso J."/>
            <person name="Kitamura H."/>
            <person name="Kitano H."/>
            <person name="Kollias G."/>
            <person name="Krishnan S.P."/>
            <person name="Kruger A."/>
            <person name="Kummerfeld S.K."/>
            <person name="Kurochkin I.V."/>
            <person name="Lareau L.F."/>
            <person name="Lazarevic D."/>
            <person name="Lipovich L."/>
            <person name="Liu J."/>
            <person name="Liuni S."/>
            <person name="McWilliam S."/>
            <person name="Madan Babu M."/>
            <person name="Madera M."/>
            <person name="Marchionni L."/>
            <person name="Matsuda H."/>
            <person name="Matsuzawa S."/>
            <person name="Miki H."/>
            <person name="Mignone F."/>
            <person name="Miyake S."/>
            <person name="Morris K."/>
            <person name="Mottagui-Tabar S."/>
            <person name="Mulder N."/>
            <person name="Nakano N."/>
            <person name="Nakauchi H."/>
            <person name="Ng P."/>
            <person name="Nilsson R."/>
            <person name="Nishiguchi S."/>
            <person name="Nishikawa S."/>
            <person name="Nori F."/>
            <person name="Ohara O."/>
            <person name="Okazaki Y."/>
            <person name="Orlando V."/>
            <person name="Pang K.C."/>
            <person name="Pavan W.J."/>
            <person name="Pavesi G."/>
            <person name="Pesole G."/>
            <person name="Petrovsky N."/>
            <person name="Piazza S."/>
            <person name="Reed J."/>
            <person name="Reid J.F."/>
            <person name="Ring B.Z."/>
            <person name="Ringwald M."/>
            <person name="Rost B."/>
            <person name="Ruan Y."/>
            <person name="Salzberg S.L."/>
            <person name="Sandelin A."/>
            <person name="Schneider C."/>
            <person name="Schoenbach C."/>
            <person name="Sekiguchi K."/>
            <person name="Semple C.A."/>
            <person name="Seno S."/>
            <person name="Sessa L."/>
            <person name="Sheng Y."/>
            <person name="Shibata Y."/>
            <person name="Shimada H."/>
            <person name="Shimada K."/>
            <person name="Silva D."/>
            <person name="Sinclair B."/>
            <person name="Sperling S."/>
            <person name="Stupka E."/>
            <person name="Sugiura K."/>
            <person name="Sultana R."/>
            <person name="Takenaka Y."/>
            <person name="Taki K."/>
            <person name="Tammoja K."/>
            <person name="Tan S.L."/>
            <person name="Tang S."/>
            <person name="Taylor M.S."/>
            <person name="Tegner J."/>
            <person name="Teichmann S.A."/>
            <person name="Ueda H.R."/>
            <person name="van Nimwegen E."/>
            <person name="Verardo R."/>
            <person name="Wei C.L."/>
            <person name="Yagi K."/>
            <person name="Yamanishi H."/>
            <person name="Zabarovsky E."/>
            <person name="Zhu S."/>
            <person name="Zimmer A."/>
            <person name="Hide W."/>
            <person name="Bult C."/>
            <person name="Grimmond S.M."/>
            <person name="Teasdale R.D."/>
            <person name="Liu E.T."/>
            <person name="Brusic V."/>
            <person name="Quackenbush J."/>
            <person name="Wahlestedt C."/>
            <person name="Mattick J.S."/>
            <person name="Hume D.A."/>
            <person name="Kai C."/>
            <person name="Sasaki D."/>
            <person name="Tomaru Y."/>
            <person name="Fukuda S."/>
            <person name="Kanamori-Katayama M."/>
            <person name="Suzuki M."/>
            <person name="Aoki J."/>
            <person name="Arakawa T."/>
            <person name="Iida J."/>
            <person name="Imamura K."/>
            <person name="Itoh M."/>
            <person name="Kato T."/>
            <person name="Kawaji H."/>
            <person name="Kawagashira N."/>
            <person name="Kawashima T."/>
            <person name="Kojima M."/>
            <person name="Kondo S."/>
            <person name="Konno H."/>
            <person name="Nakano K."/>
            <person name="Ninomiya N."/>
            <person name="Nishio T."/>
            <person name="Okada M."/>
            <person name="Plessy C."/>
            <person name="Shibata K."/>
            <person name="Shiraki T."/>
            <person name="Suzuki S."/>
            <person name="Tagami M."/>
            <person name="Waki K."/>
            <person name="Watahiki A."/>
            <person name="Okamura-Oho Y."/>
            <person name="Suzuki H."/>
            <person name="Kawai J."/>
            <person name="Hayashizaki Y."/>
        </authorList>
    </citation>
    <scope>NUCLEOTIDE SEQUENCE [LARGE SCALE MRNA]</scope>
    <source>
        <strain>C57BL/6J</strain>
        <strain>NOD</strain>
        <tissue>Heart</tissue>
        <tissue>Thymus</tissue>
    </source>
</reference>
<reference key="4">
    <citation type="journal article" date="2004" name="Genome Res.">
        <title>The status, quality, and expansion of the NIH full-length cDNA project: the Mammalian Gene Collection (MGC).</title>
        <authorList>
            <consortium name="The MGC Project Team"/>
        </authorList>
    </citation>
    <scope>NUCLEOTIDE SEQUENCE [LARGE SCALE MRNA]</scope>
    <source>
        <strain>Czech II</strain>
        <tissue>Mammary gland</tissue>
        <tissue>Salivary gland</tissue>
    </source>
</reference>
<reference key="5">
    <citation type="journal article" date="2004" name="Mol. Cell">
        <title>Inhibition of both the extrinsic and intrinsic death pathways through nonhomotypic death-fold interactions.</title>
        <authorList>
            <person name="Nam Y.J."/>
            <person name="Mani K."/>
            <person name="Ashton A.W."/>
            <person name="Peng C.F."/>
            <person name="Krishnamurthy B."/>
            <person name="Hayakawa Y."/>
            <person name="Lee P."/>
            <person name="Korsmeyer S.J."/>
            <person name="Kitsis R.N."/>
        </authorList>
    </citation>
    <scope>INTERACTION WITH NOL3</scope>
</reference>
<reference key="6">
    <citation type="journal article" date="2010" name="Cell">
        <title>A tissue-specific atlas of mouse protein phosphorylation and expression.</title>
        <authorList>
            <person name="Huttlin E.L."/>
            <person name="Jedrychowski M.P."/>
            <person name="Elias J.E."/>
            <person name="Goswami T."/>
            <person name="Rad R."/>
            <person name="Beausoleil S.A."/>
            <person name="Villen J."/>
            <person name="Haas W."/>
            <person name="Sowa M.E."/>
            <person name="Gygi S.P."/>
        </authorList>
    </citation>
    <scope>PHOSPHORYLATION [LARGE SCALE ANALYSIS] AT SER-191</scope>
    <scope>IDENTIFICATION BY MASS SPECTROMETRY [LARGE SCALE ANALYSIS]</scope>
    <source>
        <tissue>Brown adipose tissue</tissue>
        <tissue>Heart</tissue>
        <tissue>Kidney</tissue>
        <tissue>Liver</tissue>
        <tissue>Lung</tissue>
        <tissue>Pancreas</tissue>
        <tissue>Spleen</tissue>
        <tissue>Testis</tissue>
    </source>
</reference>
<reference key="7">
    <citation type="journal article" date="2017" name="Nat. Commun.">
        <title>Regulation of RIPK1 activation by TAK1-mediated phosphorylation dictates apoptosis and necroptosis.</title>
        <authorList>
            <person name="Geng J."/>
            <person name="Ito Y."/>
            <person name="Shi L."/>
            <person name="Amin P."/>
            <person name="Chu J."/>
            <person name="Ouchida A.T."/>
            <person name="Mookhtiar A.K."/>
            <person name="Zhao H."/>
            <person name="Xu D."/>
            <person name="Shan B."/>
            <person name="Najafov A."/>
            <person name="Gao G."/>
            <person name="Akira S."/>
            <person name="Yuan J."/>
        </authorList>
    </citation>
    <scope>INTERACTION WITH RIPK1</scope>
</reference>
<reference key="8">
    <citation type="journal article" date="2018" name="Proc. Natl. Acad. Sci. U.S.A.">
        <title>Death-domain dimerization-mediated activation of RIPK1 controls necroptosis and RIPK1-dependent apoptosis.</title>
        <authorList>
            <person name="Meng H."/>
            <person name="Liu Z."/>
            <person name="Li X."/>
            <person name="Wang H."/>
            <person name="Jin T."/>
            <person name="Wu G."/>
            <person name="Shan B."/>
            <person name="Christofferson D.E."/>
            <person name="Qi C."/>
            <person name="Yu Q."/>
            <person name="Li Y."/>
            <person name="Yuan J."/>
        </authorList>
    </citation>
    <scope>INTERACTION WITH CASP8 AND RIPK1</scope>
</reference>
<reference key="9">
    <citation type="journal article" date="2019" name="Cell Death Differ.">
        <title>RIPK1 prevents TRADD-driven, but TNFR1 independent, apoptosis during development.</title>
        <authorList>
            <person name="Anderton H."/>
            <person name="Bandala-Sanchez E."/>
            <person name="Simpson D.S."/>
            <person name="Rickard J.A."/>
            <person name="Ng A.P."/>
            <person name="Di Rago L."/>
            <person name="Hall C."/>
            <person name="Vince J.E."/>
            <person name="Silke J."/>
            <person name="Liccardi G."/>
            <person name="Feltham R."/>
        </authorList>
    </citation>
    <scope>INTERACTION WITH TRADD</scope>
</reference>
<reference key="10">
    <citation type="journal article" date="2019" name="Nat. Commun.">
        <title>K63-linked ubiquitination regulates RIPK1 kinase activity to prevent cell death during embryogenesis and inflammation.</title>
        <authorList>
            <person name="Tang Y."/>
            <person name="Tu H."/>
            <person name="Zhang J."/>
            <person name="Zhao X."/>
            <person name="Wang Y."/>
            <person name="Qin J."/>
            <person name="Lin X."/>
        </authorList>
    </citation>
    <scope>INTERACTION WITH RIPK1</scope>
</reference>
<reference key="11">
    <citation type="journal article" date="2021" name="Nature">
        <title>AIM2 forms a complex with pyrin and ZBP1 to drive PANoptosis and host defence.</title>
        <authorList>
            <person name="Lee S."/>
            <person name="Karki R."/>
            <person name="Wang Y."/>
            <person name="Nguyen L.N."/>
            <person name="Kalathur R.C."/>
            <person name="Kanneganti T.D."/>
        </authorList>
    </citation>
    <scope>IDENTIFICATION IN THE AIM2 PANOPTOSOME COMPLEX</scope>
</reference>
<reference key="12">
    <citation type="journal article" date="1999" name="J. Biol. Chem.">
        <title>The solution structure of FADD death domain. Structural basis of death domain interactions of Fas and FADD.</title>
        <authorList>
            <person name="Jeong E.-J."/>
            <person name="Bang S."/>
            <person name="Lee T.H."/>
            <person name="Park Y.-I."/>
            <person name="Sim W.-S."/>
            <person name="Kim K.-S."/>
        </authorList>
    </citation>
    <scope>STRUCTURE BY NMR OF 89-183</scope>
</reference>
<protein>
    <recommendedName>
        <fullName evidence="11">FAS-associated death domain protein</fullName>
    </recommendedName>
    <alternativeName>
        <fullName evidence="11">FAS-associating death domain-containing protein</fullName>
    </alternativeName>
    <alternativeName>
        <fullName evidence="11">Mediator of receptor induced toxicity</fullName>
    </alternativeName>
</protein>
<accession>Q61160</accession>
<accession>Q3TC37</accession>
<accession>Q61082</accession>
<proteinExistence type="evidence at protein level"/>
<name>FADD_MOUSE</name>
<organism>
    <name type="scientific">Mus musculus</name>
    <name type="common">Mouse</name>
    <dbReference type="NCBI Taxonomy" id="10090"/>
    <lineage>
        <taxon>Eukaryota</taxon>
        <taxon>Metazoa</taxon>
        <taxon>Chordata</taxon>
        <taxon>Craniata</taxon>
        <taxon>Vertebrata</taxon>
        <taxon>Euteleostomi</taxon>
        <taxon>Mammalia</taxon>
        <taxon>Eutheria</taxon>
        <taxon>Euarchontoglires</taxon>
        <taxon>Glires</taxon>
        <taxon>Rodentia</taxon>
        <taxon>Myomorpha</taxon>
        <taxon>Muroidea</taxon>
        <taxon>Muridae</taxon>
        <taxon>Murinae</taxon>
        <taxon>Mus</taxon>
        <taxon>Mus</taxon>
    </lineage>
</organism>
<evidence type="ECO:0000250" key="1">
    <source>
        <dbReference type="UniProtKB" id="Q13158"/>
    </source>
</evidence>
<evidence type="ECO:0000255" key="2">
    <source>
        <dbReference type="PROSITE-ProRule" id="PRU00064"/>
    </source>
</evidence>
<evidence type="ECO:0000255" key="3">
    <source>
        <dbReference type="PROSITE-ProRule" id="PRU00065"/>
    </source>
</evidence>
<evidence type="ECO:0000256" key="4">
    <source>
        <dbReference type="SAM" id="MobiDB-lite"/>
    </source>
</evidence>
<evidence type="ECO:0000269" key="5">
    <source>
    </source>
</evidence>
<evidence type="ECO:0000269" key="6">
    <source>
    </source>
</evidence>
<evidence type="ECO:0000269" key="7">
    <source>
    </source>
</evidence>
<evidence type="ECO:0000269" key="8">
    <source>
    </source>
</evidence>
<evidence type="ECO:0000269" key="9">
    <source>
    </source>
</evidence>
<evidence type="ECO:0000269" key="10">
    <source>
    </source>
</evidence>
<evidence type="ECO:0000303" key="11">
    <source>
    </source>
</evidence>
<evidence type="ECO:0000305" key="12"/>
<evidence type="ECO:0000312" key="13">
    <source>
        <dbReference type="MGI" id="MGI:109324"/>
    </source>
</evidence>
<evidence type="ECO:0007744" key="14">
    <source>
    </source>
</evidence>
<evidence type="ECO:0007829" key="15">
    <source>
        <dbReference type="PDB" id="1FAD"/>
    </source>
</evidence>
<dbReference type="EMBL" id="U50406">
    <property type="protein sequence ID" value="AAB07789.1"/>
    <property type="molecule type" value="mRNA"/>
</dbReference>
<dbReference type="EMBL" id="U43184">
    <property type="protein sequence ID" value="AAA97876.1"/>
    <property type="molecule type" value="mRNA"/>
</dbReference>
<dbReference type="EMBL" id="AK084808">
    <property type="protein sequence ID" value="BAC39283.1"/>
    <property type="molecule type" value="mRNA"/>
</dbReference>
<dbReference type="EMBL" id="AK169798">
    <property type="protein sequence ID" value="BAE41374.1"/>
    <property type="molecule type" value="mRNA"/>
</dbReference>
<dbReference type="EMBL" id="AK170927">
    <property type="protein sequence ID" value="BAE42120.1"/>
    <property type="molecule type" value="mRNA"/>
</dbReference>
<dbReference type="EMBL" id="BC004584">
    <property type="protein sequence ID" value="AAH04584.1"/>
    <property type="molecule type" value="mRNA"/>
</dbReference>
<dbReference type="EMBL" id="BC021400">
    <property type="protein sequence ID" value="AAH21400.1"/>
    <property type="molecule type" value="mRNA"/>
</dbReference>
<dbReference type="CCDS" id="CCDS22050.1"/>
<dbReference type="RefSeq" id="NP_034305.1">
    <property type="nucleotide sequence ID" value="NM_010175.6"/>
</dbReference>
<dbReference type="PDB" id="1FAD">
    <property type="method" value="NMR"/>
    <property type="chains" value="A=89-183"/>
</dbReference>
<dbReference type="PDBsum" id="1FAD"/>
<dbReference type="SMR" id="Q61160"/>
<dbReference type="BioGRID" id="199586">
    <property type="interactions" value="17"/>
</dbReference>
<dbReference type="ComplexPortal" id="CPX-1914">
    <property type="entry name" value="Ripoptosome"/>
</dbReference>
<dbReference type="CORUM" id="Q61160"/>
<dbReference type="DIP" id="DIP-34771N"/>
<dbReference type="FunCoup" id="Q61160">
    <property type="interactions" value="829"/>
</dbReference>
<dbReference type="IntAct" id="Q61160">
    <property type="interactions" value="15"/>
</dbReference>
<dbReference type="MINT" id="Q61160"/>
<dbReference type="STRING" id="10090.ENSMUSP00000033394"/>
<dbReference type="GlyGen" id="Q61160">
    <property type="glycosylation" value="1 site"/>
</dbReference>
<dbReference type="iPTMnet" id="Q61160"/>
<dbReference type="PhosphoSitePlus" id="Q61160"/>
<dbReference type="jPOST" id="Q61160"/>
<dbReference type="PaxDb" id="10090-ENSMUSP00000033394"/>
<dbReference type="PeptideAtlas" id="Q61160"/>
<dbReference type="ProteomicsDB" id="271550"/>
<dbReference type="Pumba" id="Q61160"/>
<dbReference type="Antibodypedia" id="698">
    <property type="antibodies" value="1037 antibodies from 42 providers"/>
</dbReference>
<dbReference type="DNASU" id="14082"/>
<dbReference type="Ensembl" id="ENSMUST00000033394.8">
    <property type="protein sequence ID" value="ENSMUSP00000033394.8"/>
    <property type="gene ID" value="ENSMUSG00000031077.8"/>
</dbReference>
<dbReference type="GeneID" id="14082"/>
<dbReference type="KEGG" id="mmu:14082"/>
<dbReference type="UCSC" id="uc009kql.1">
    <property type="organism name" value="mouse"/>
</dbReference>
<dbReference type="AGR" id="MGI:109324"/>
<dbReference type="CTD" id="8772"/>
<dbReference type="MGI" id="MGI:109324">
    <property type="gene designation" value="Fadd"/>
</dbReference>
<dbReference type="VEuPathDB" id="HostDB:ENSMUSG00000031077"/>
<dbReference type="eggNOG" id="ENOG502S2RV">
    <property type="taxonomic scope" value="Eukaryota"/>
</dbReference>
<dbReference type="GeneTree" id="ENSGT00390000002105"/>
<dbReference type="HOGENOM" id="CLU_087961_0_0_1"/>
<dbReference type="InParanoid" id="Q61160"/>
<dbReference type="OMA" id="CKMNLVA"/>
<dbReference type="OrthoDB" id="100767at2759"/>
<dbReference type="PhylomeDB" id="Q61160"/>
<dbReference type="TreeFam" id="TF102046"/>
<dbReference type="Reactome" id="R-MMU-140534">
    <property type="pathway name" value="Caspase activation via Death Receptors in the presence of ligand"/>
</dbReference>
<dbReference type="Reactome" id="R-MMU-2562578">
    <property type="pathway name" value="TRIF-mediated programmed cell death"/>
</dbReference>
<dbReference type="Reactome" id="R-MMU-3371378">
    <property type="pathway name" value="Regulation by c-FLIP"/>
</dbReference>
<dbReference type="Reactome" id="R-MMU-5218900">
    <property type="pathway name" value="CASP8 activity is inhibited"/>
</dbReference>
<dbReference type="Reactome" id="R-MMU-5357786">
    <property type="pathway name" value="TNFR1-induced proapoptotic signaling"/>
</dbReference>
<dbReference type="Reactome" id="R-MMU-5357905">
    <property type="pathway name" value="Regulation of TNFR1 signaling"/>
</dbReference>
<dbReference type="Reactome" id="R-MMU-5675482">
    <property type="pathway name" value="Regulation of necroptotic cell death"/>
</dbReference>
<dbReference type="Reactome" id="R-MMU-69416">
    <property type="pathway name" value="Dimerization of procaspase-8"/>
</dbReference>
<dbReference type="Reactome" id="R-MMU-75157">
    <property type="pathway name" value="FasL/ CD95L signaling"/>
</dbReference>
<dbReference type="Reactome" id="R-MMU-75158">
    <property type="pathway name" value="TRAIL signaling"/>
</dbReference>
<dbReference type="BioGRID-ORCS" id="14082">
    <property type="hits" value="26 hits in 81 CRISPR screens"/>
</dbReference>
<dbReference type="ChiTaRS" id="Fadd">
    <property type="organism name" value="mouse"/>
</dbReference>
<dbReference type="EvolutionaryTrace" id="Q61160"/>
<dbReference type="PRO" id="PR:Q61160"/>
<dbReference type="Proteomes" id="UP000000589">
    <property type="component" value="Chromosome 7"/>
</dbReference>
<dbReference type="RNAct" id="Q61160">
    <property type="molecule type" value="protein"/>
</dbReference>
<dbReference type="Bgee" id="ENSMUSG00000031077">
    <property type="expression patterns" value="Expressed in substantia propria of cornea and 204 other cell types or tissues"/>
</dbReference>
<dbReference type="GO" id="GO:0031265">
    <property type="term" value="C:CD95 death-inducing signaling complex"/>
    <property type="evidence" value="ECO:0007669"/>
    <property type="project" value="Ensembl"/>
</dbReference>
<dbReference type="GO" id="GO:0044297">
    <property type="term" value="C:cell body"/>
    <property type="evidence" value="ECO:0007669"/>
    <property type="project" value="Ensembl"/>
</dbReference>
<dbReference type="GO" id="GO:0097342">
    <property type="term" value="C:ripoptosome"/>
    <property type="evidence" value="ECO:0000250"/>
    <property type="project" value="UniProtKB"/>
</dbReference>
<dbReference type="GO" id="GO:0089720">
    <property type="term" value="F:caspase binding"/>
    <property type="evidence" value="ECO:0000250"/>
    <property type="project" value="UniProtKB"/>
</dbReference>
<dbReference type="GO" id="GO:0035877">
    <property type="term" value="F:death effector domain binding"/>
    <property type="evidence" value="ECO:0007669"/>
    <property type="project" value="Ensembl"/>
</dbReference>
<dbReference type="GO" id="GO:0005123">
    <property type="term" value="F:death receptor binding"/>
    <property type="evidence" value="ECO:0007669"/>
    <property type="project" value="Ensembl"/>
</dbReference>
<dbReference type="GO" id="GO:0042802">
    <property type="term" value="F:identical protein binding"/>
    <property type="evidence" value="ECO:0007669"/>
    <property type="project" value="Ensembl"/>
</dbReference>
<dbReference type="GO" id="GO:0044877">
    <property type="term" value="F:protein-containing complex binding"/>
    <property type="evidence" value="ECO:0007669"/>
    <property type="project" value="Ensembl"/>
</dbReference>
<dbReference type="GO" id="GO:0033612">
    <property type="term" value="F:receptor serine/threonine kinase binding"/>
    <property type="evidence" value="ECO:0007669"/>
    <property type="project" value="Ensembl"/>
</dbReference>
<dbReference type="GO" id="GO:0035591">
    <property type="term" value="F:signaling adaptor activity"/>
    <property type="evidence" value="ECO:0000314"/>
    <property type="project" value="MGI"/>
</dbReference>
<dbReference type="GO" id="GO:0005164">
    <property type="term" value="F:tumor necrosis factor receptor binding"/>
    <property type="evidence" value="ECO:0007669"/>
    <property type="project" value="Ensembl"/>
</dbReference>
<dbReference type="GO" id="GO:0006915">
    <property type="term" value="P:apoptotic process"/>
    <property type="evidence" value="ECO:0000250"/>
    <property type="project" value="UniProtKB"/>
</dbReference>
<dbReference type="GO" id="GO:0048148">
    <property type="term" value="P:behavioral response to cocaine"/>
    <property type="evidence" value="ECO:0007669"/>
    <property type="project" value="Ensembl"/>
</dbReference>
<dbReference type="GO" id="GO:0048738">
    <property type="term" value="P:cardiac muscle tissue development"/>
    <property type="evidence" value="ECO:0000304"/>
    <property type="project" value="UniProtKB"/>
</dbReference>
<dbReference type="GO" id="GO:0071260">
    <property type="term" value="P:cellular response to mechanical stimulus"/>
    <property type="evidence" value="ECO:0007669"/>
    <property type="project" value="Ensembl"/>
</dbReference>
<dbReference type="GO" id="GO:0071550">
    <property type="term" value="P:death-inducing signaling complex assembly"/>
    <property type="evidence" value="ECO:0007669"/>
    <property type="project" value="Ensembl"/>
</dbReference>
<dbReference type="GO" id="GO:0051607">
    <property type="term" value="P:defense response to virus"/>
    <property type="evidence" value="ECO:0007669"/>
    <property type="project" value="Ensembl"/>
</dbReference>
<dbReference type="GO" id="GO:0097191">
    <property type="term" value="P:extrinsic apoptotic signaling pathway"/>
    <property type="evidence" value="ECO:0000314"/>
    <property type="project" value="MGI"/>
</dbReference>
<dbReference type="GO" id="GO:0097192">
    <property type="term" value="P:extrinsic apoptotic signaling pathway in absence of ligand"/>
    <property type="evidence" value="ECO:0000315"/>
    <property type="project" value="MGI"/>
</dbReference>
<dbReference type="GO" id="GO:0008625">
    <property type="term" value="P:extrinsic apoptotic signaling pathway via death domain receptors"/>
    <property type="evidence" value="ECO:0000250"/>
    <property type="project" value="UniProtKB"/>
</dbReference>
<dbReference type="GO" id="GO:0045087">
    <property type="term" value="P:innate immune response"/>
    <property type="evidence" value="ECO:0000304"/>
    <property type="project" value="UniProtKB"/>
</dbReference>
<dbReference type="GO" id="GO:0001822">
    <property type="term" value="P:kidney development"/>
    <property type="evidence" value="ECO:0007669"/>
    <property type="project" value="Ensembl"/>
</dbReference>
<dbReference type="GO" id="GO:0048535">
    <property type="term" value="P:lymph node development"/>
    <property type="evidence" value="ECO:0000316"/>
    <property type="project" value="UniProtKB"/>
</dbReference>
<dbReference type="GO" id="GO:0097049">
    <property type="term" value="P:motor neuron apoptotic process"/>
    <property type="evidence" value="ECO:0000315"/>
    <property type="project" value="MGI"/>
</dbReference>
<dbReference type="GO" id="GO:0097527">
    <property type="term" value="P:necroptotic signaling pathway"/>
    <property type="evidence" value="ECO:0007669"/>
    <property type="project" value="Ensembl"/>
</dbReference>
<dbReference type="GO" id="GO:0070236">
    <property type="term" value="P:negative regulation of activation-induced cell death of T cells"/>
    <property type="evidence" value="ECO:0000315"/>
    <property type="project" value="UniProtKB"/>
</dbReference>
<dbReference type="GO" id="GO:0060546">
    <property type="term" value="P:negative regulation of necroptotic process"/>
    <property type="evidence" value="ECO:0000316"/>
    <property type="project" value="MGI"/>
</dbReference>
<dbReference type="GO" id="GO:0042104">
    <property type="term" value="P:positive regulation of activated T cell proliferation"/>
    <property type="evidence" value="ECO:0000315"/>
    <property type="project" value="UniProtKB"/>
</dbReference>
<dbReference type="GO" id="GO:0002821">
    <property type="term" value="P:positive regulation of adaptive immune response"/>
    <property type="evidence" value="ECO:0000315"/>
    <property type="project" value="UniProtKB"/>
</dbReference>
<dbReference type="GO" id="GO:0043123">
    <property type="term" value="P:positive regulation of canonical NF-kappaB signal transduction"/>
    <property type="evidence" value="ECO:0007669"/>
    <property type="project" value="Ensembl"/>
</dbReference>
<dbReference type="GO" id="GO:2000454">
    <property type="term" value="P:positive regulation of CD8-positive, alpha-beta cytotoxic T cell extravasation"/>
    <property type="evidence" value="ECO:0000315"/>
    <property type="project" value="UniProtKB"/>
</dbReference>
<dbReference type="GO" id="GO:1900119">
    <property type="term" value="P:positive regulation of execution phase of apoptosis"/>
    <property type="evidence" value="ECO:0000314"/>
    <property type="project" value="MGI"/>
</dbReference>
<dbReference type="GO" id="GO:2001238">
    <property type="term" value="P:positive regulation of extrinsic apoptotic signaling pathway"/>
    <property type="evidence" value="ECO:0000316"/>
    <property type="project" value="MGI"/>
</dbReference>
<dbReference type="GO" id="GO:0032757">
    <property type="term" value="P:positive regulation of interleukin-8 production"/>
    <property type="evidence" value="ECO:0007669"/>
    <property type="project" value="Ensembl"/>
</dbReference>
<dbReference type="GO" id="GO:0045651">
    <property type="term" value="P:positive regulation of macrophage differentiation"/>
    <property type="evidence" value="ECO:0007669"/>
    <property type="project" value="Ensembl"/>
</dbReference>
<dbReference type="GO" id="GO:0045862">
    <property type="term" value="P:positive regulation of proteolysis"/>
    <property type="evidence" value="ECO:0007669"/>
    <property type="project" value="Ensembl"/>
</dbReference>
<dbReference type="GO" id="GO:0001916">
    <property type="term" value="P:positive regulation of T cell mediated cytotoxicity"/>
    <property type="evidence" value="ECO:0000315"/>
    <property type="project" value="UniProtKB"/>
</dbReference>
<dbReference type="GO" id="GO:0045944">
    <property type="term" value="P:positive regulation of transcription by RNA polymerase II"/>
    <property type="evidence" value="ECO:0007669"/>
    <property type="project" value="Ensembl"/>
</dbReference>
<dbReference type="GO" id="GO:0032760">
    <property type="term" value="P:positive regulation of tumor necrosis factor production"/>
    <property type="evidence" value="ECO:0007669"/>
    <property type="project" value="Ensembl"/>
</dbReference>
<dbReference type="GO" id="GO:0060340">
    <property type="term" value="P:positive regulation of type I interferon-mediated signaling pathway"/>
    <property type="evidence" value="ECO:0007669"/>
    <property type="project" value="Ensembl"/>
</dbReference>
<dbReference type="GO" id="GO:0032729">
    <property type="term" value="P:positive regulation of type II interferon production"/>
    <property type="evidence" value="ECO:0000315"/>
    <property type="project" value="UniProtKB"/>
</dbReference>
<dbReference type="GO" id="GO:0048536">
    <property type="term" value="P:spleen development"/>
    <property type="evidence" value="ECO:0000316"/>
    <property type="project" value="UniProtKB"/>
</dbReference>
<dbReference type="GO" id="GO:0030217">
    <property type="term" value="P:T cell differentiation"/>
    <property type="evidence" value="ECO:0000304"/>
    <property type="project" value="UniProtKB"/>
</dbReference>
<dbReference type="GO" id="GO:0033077">
    <property type="term" value="P:T cell differentiation in thymus"/>
    <property type="evidence" value="ECO:0000315"/>
    <property type="project" value="UniProtKB"/>
</dbReference>
<dbReference type="GO" id="GO:0043029">
    <property type="term" value="P:T cell homeostasis"/>
    <property type="evidence" value="ECO:0000315"/>
    <property type="project" value="UniProtKB"/>
</dbReference>
<dbReference type="GO" id="GO:0048538">
    <property type="term" value="P:thymus development"/>
    <property type="evidence" value="ECO:0000316"/>
    <property type="project" value="UniProtKB"/>
</dbReference>
<dbReference type="GO" id="GO:0036462">
    <property type="term" value="P:TRAIL-activated apoptotic signaling pathway"/>
    <property type="evidence" value="ECO:0007669"/>
    <property type="project" value="Ensembl"/>
</dbReference>
<dbReference type="CDD" id="cd08306">
    <property type="entry name" value="Death_FADD"/>
    <property type="match status" value="1"/>
</dbReference>
<dbReference type="CDD" id="cd08336">
    <property type="entry name" value="DED_FADD"/>
    <property type="match status" value="1"/>
</dbReference>
<dbReference type="FunFam" id="1.10.533.10:FF:000059">
    <property type="entry name" value="Fas-associated via death domain"/>
    <property type="match status" value="1"/>
</dbReference>
<dbReference type="FunFam" id="1.10.533.10:FF:000062">
    <property type="entry name" value="Fas-associated via death domain"/>
    <property type="match status" value="1"/>
</dbReference>
<dbReference type="Gene3D" id="1.10.533.10">
    <property type="entry name" value="Death Domain, Fas"/>
    <property type="match status" value="2"/>
</dbReference>
<dbReference type="InterPro" id="IPR011029">
    <property type="entry name" value="DEATH-like_dom_sf"/>
</dbReference>
<dbReference type="InterPro" id="IPR000488">
    <property type="entry name" value="Death_dom"/>
</dbReference>
<dbReference type="InterPro" id="IPR001875">
    <property type="entry name" value="DED_dom"/>
</dbReference>
<dbReference type="InterPro" id="IPR016729">
    <property type="entry name" value="FADD"/>
</dbReference>
<dbReference type="InterPro" id="IPR049634">
    <property type="entry name" value="FADD_vert"/>
</dbReference>
<dbReference type="PANTHER" id="PTHR15077:SF10">
    <property type="entry name" value="FAS-ASSOCIATED DEATH DOMAIN PROTEIN"/>
    <property type="match status" value="1"/>
</dbReference>
<dbReference type="PANTHER" id="PTHR15077">
    <property type="entry name" value="FAS-ASSOCIATING DEATH DOMAIN-CONTAINING PROTEIN FADD"/>
    <property type="match status" value="1"/>
</dbReference>
<dbReference type="Pfam" id="PF00531">
    <property type="entry name" value="Death"/>
    <property type="match status" value="1"/>
</dbReference>
<dbReference type="Pfam" id="PF01335">
    <property type="entry name" value="DED"/>
    <property type="match status" value="1"/>
</dbReference>
<dbReference type="PIRSF" id="PIRSF018586">
    <property type="entry name" value="FADD"/>
    <property type="match status" value="1"/>
</dbReference>
<dbReference type="SMART" id="SM00005">
    <property type="entry name" value="DEATH"/>
    <property type="match status" value="1"/>
</dbReference>
<dbReference type="SMART" id="SM00031">
    <property type="entry name" value="DED"/>
    <property type="match status" value="1"/>
</dbReference>
<dbReference type="SUPFAM" id="SSF47986">
    <property type="entry name" value="DEATH domain"/>
    <property type="match status" value="1"/>
</dbReference>
<dbReference type="PROSITE" id="PS50017">
    <property type="entry name" value="DEATH_DOMAIN"/>
    <property type="match status" value="1"/>
</dbReference>
<dbReference type="PROSITE" id="PS50168">
    <property type="entry name" value="DED"/>
    <property type="match status" value="1"/>
</dbReference>
<keyword id="KW-0002">3D-structure</keyword>
<keyword id="KW-0053">Apoptosis</keyword>
<keyword id="KW-0963">Cytoplasm</keyword>
<keyword id="KW-0391">Immunity</keyword>
<keyword id="KW-0399">Innate immunity</keyword>
<keyword id="KW-0597">Phosphoprotein</keyword>
<keyword id="KW-1185">Reference proteome</keyword>
<feature type="chain" id="PRO_0000191280" description="FAS-associated death domain protein">
    <location>
        <begin position="1"/>
        <end position="205"/>
    </location>
</feature>
<feature type="domain" description="DED" evidence="3">
    <location>
        <begin position="3"/>
        <end position="81"/>
    </location>
</feature>
<feature type="domain" description="Death" evidence="2">
    <location>
        <begin position="97"/>
        <end position="181"/>
    </location>
</feature>
<feature type="region of interest" description="Disordered" evidence="4">
    <location>
        <begin position="181"/>
        <end position="205"/>
    </location>
</feature>
<feature type="modified residue" description="Phosphoserine" evidence="14">
    <location>
        <position position="191"/>
    </location>
</feature>
<feature type="sequence conflict" description="In Ref. 2; AAA97876." evidence="12" ref="2">
    <original>C</original>
    <variation>F</variation>
    <location>
        <position position="168"/>
    </location>
</feature>
<feature type="helix" evidence="15">
    <location>
        <begin position="94"/>
        <end position="118"/>
    </location>
</feature>
<feature type="helix" evidence="15">
    <location>
        <begin position="123"/>
        <end position="132"/>
    </location>
</feature>
<feature type="helix" evidence="15">
    <location>
        <begin position="137"/>
        <end position="152"/>
    </location>
</feature>
<feature type="helix" evidence="15">
    <location>
        <begin position="153"/>
        <end position="156"/>
    </location>
</feature>
<feature type="helix" evidence="15">
    <location>
        <begin position="158"/>
        <end position="168"/>
    </location>
</feature>
<feature type="helix" evidence="15">
    <location>
        <begin position="171"/>
        <end position="181"/>
    </location>
</feature>